<gene>
    <name evidence="8" type="primary">frbG</name>
    <name type="ORF">ANO11243_029910</name>
</gene>
<comment type="function">
    <text evidence="7 10">ABC-type transporter; part of the gene cluster that mediates the biosynthesis of the antifungal antibiotic FR901469, an inhibitor of beta-1,3-glucansynthase, exerting antifungal activity against the pathogenes Candida albicans and Aspergillus fumigatus (PubMed:27660098). FR901469 is a cyclic depsipeptide containing 12 amino acid residues and a fatty acid chain (PubMed:27660098). Probably involved in the secretion of FR901469 (Probable).</text>
</comment>
<comment type="subcellular location">
    <subcellularLocation>
        <location evidence="9">Cell membrane</location>
        <topology evidence="1">Multi-pass membrane protein</topology>
    </subcellularLocation>
</comment>
<comment type="induction">
    <text evidence="7">Expression is positively regulated by the cluster-specific transcription factor frbF.</text>
</comment>
<comment type="biotechnology">
    <text evidence="5 6">FR901469 inhibits the activity of 1,3-beta-glucan synthase from Candida albicans and Aspergillus fumigatus (PubMed:11099224, PubMed:11099225). With minimal inhibitory concentrations (MICs) against Candida albicans and Aspergillus fumigatus of 0.63 ug/ml and 0.16 ug/ml, repectively, FR901469 displays greater inhibitory activity than other 1,3-beta-glucan synthase inhibitors such as, WF11899A, echinocandin B, aculeacin A, and papulacandin B (PubMed:11099224, PubMed:11099225).</text>
</comment>
<comment type="similarity">
    <text evidence="9">Belongs to the ABC transporter superfamily. ABCC family. Conjugate transporter (TC 3.A.1.208) subfamily.</text>
</comment>
<name>FRBG_DOTX1</name>
<protein>
    <recommendedName>
        <fullName evidence="8">ABC-type transporter frbG</fullName>
    </recommendedName>
    <alternativeName>
        <fullName evidence="8">FR901469 biosynthesis cluster protein G</fullName>
    </alternativeName>
</protein>
<keyword id="KW-0067">ATP-binding</keyword>
<keyword id="KW-1003">Cell membrane</keyword>
<keyword id="KW-0325">Glycoprotein</keyword>
<keyword id="KW-0472">Membrane</keyword>
<keyword id="KW-0547">Nucleotide-binding</keyword>
<keyword id="KW-1185">Reference proteome</keyword>
<keyword id="KW-0812">Transmembrane</keyword>
<keyword id="KW-1133">Transmembrane helix</keyword>
<keyword id="KW-0813">Transport</keyword>
<dbReference type="EMBL" id="DF938583">
    <property type="protein sequence ID" value="GAM84988.1"/>
    <property type="molecule type" value="Genomic_DNA"/>
</dbReference>
<dbReference type="SMR" id="A0A0S6XH62"/>
<dbReference type="STRING" id="1603295.A0A0S6XH62"/>
<dbReference type="GlyCosmos" id="A0A0S6XH62">
    <property type="glycosylation" value="7 sites, No reported glycans"/>
</dbReference>
<dbReference type="OrthoDB" id="6500128at2759"/>
<dbReference type="Proteomes" id="UP000054361">
    <property type="component" value="Unassembled WGS sequence"/>
</dbReference>
<dbReference type="GO" id="GO:0005886">
    <property type="term" value="C:plasma membrane"/>
    <property type="evidence" value="ECO:0007669"/>
    <property type="project" value="UniProtKB-SubCell"/>
</dbReference>
<dbReference type="GO" id="GO:0140359">
    <property type="term" value="F:ABC-type transporter activity"/>
    <property type="evidence" value="ECO:0007669"/>
    <property type="project" value="InterPro"/>
</dbReference>
<dbReference type="GO" id="GO:0005524">
    <property type="term" value="F:ATP binding"/>
    <property type="evidence" value="ECO:0007669"/>
    <property type="project" value="UniProtKB-KW"/>
</dbReference>
<dbReference type="GO" id="GO:0016887">
    <property type="term" value="F:ATP hydrolysis activity"/>
    <property type="evidence" value="ECO:0007669"/>
    <property type="project" value="InterPro"/>
</dbReference>
<dbReference type="CDD" id="cd18579">
    <property type="entry name" value="ABC_6TM_ABCC_D1"/>
    <property type="match status" value="1"/>
</dbReference>
<dbReference type="CDD" id="cd18580">
    <property type="entry name" value="ABC_6TM_ABCC_D2"/>
    <property type="match status" value="1"/>
</dbReference>
<dbReference type="FunFam" id="1.20.1560.10:FF:000055">
    <property type="entry name" value="ABC multidrug transporter (Eurofung)"/>
    <property type="match status" value="1"/>
</dbReference>
<dbReference type="FunFam" id="1.20.1560.10:FF:000066">
    <property type="entry name" value="ABC multidrug transporter (Eurofung)"/>
    <property type="match status" value="1"/>
</dbReference>
<dbReference type="FunFam" id="3.40.50.300:FF:002145">
    <property type="entry name" value="ABC transporter (MsbA subfamily)"/>
    <property type="match status" value="1"/>
</dbReference>
<dbReference type="Gene3D" id="1.20.1560.10">
    <property type="entry name" value="ABC transporter type 1, transmembrane domain"/>
    <property type="match status" value="2"/>
</dbReference>
<dbReference type="Gene3D" id="3.40.50.300">
    <property type="entry name" value="P-loop containing nucleotide triphosphate hydrolases"/>
    <property type="match status" value="2"/>
</dbReference>
<dbReference type="InterPro" id="IPR003593">
    <property type="entry name" value="AAA+_ATPase"/>
</dbReference>
<dbReference type="InterPro" id="IPR011527">
    <property type="entry name" value="ABC1_TM_dom"/>
</dbReference>
<dbReference type="InterPro" id="IPR036640">
    <property type="entry name" value="ABC1_TM_sf"/>
</dbReference>
<dbReference type="InterPro" id="IPR003439">
    <property type="entry name" value="ABC_transporter-like_ATP-bd"/>
</dbReference>
<dbReference type="InterPro" id="IPR017871">
    <property type="entry name" value="ABC_transporter-like_CS"/>
</dbReference>
<dbReference type="InterPro" id="IPR050173">
    <property type="entry name" value="ABC_transporter_C-like"/>
</dbReference>
<dbReference type="InterPro" id="IPR044746">
    <property type="entry name" value="ABCC_6TM_D1"/>
</dbReference>
<dbReference type="InterPro" id="IPR044726">
    <property type="entry name" value="ABCC_6TM_D2"/>
</dbReference>
<dbReference type="InterPro" id="IPR027417">
    <property type="entry name" value="P-loop_NTPase"/>
</dbReference>
<dbReference type="InterPro" id="IPR056227">
    <property type="entry name" value="TMD0_ABC"/>
</dbReference>
<dbReference type="PANTHER" id="PTHR24223:SF399">
    <property type="entry name" value="ABC TRANSPORTER ATNG"/>
    <property type="match status" value="1"/>
</dbReference>
<dbReference type="PANTHER" id="PTHR24223">
    <property type="entry name" value="ATP-BINDING CASSETTE SUB-FAMILY C"/>
    <property type="match status" value="1"/>
</dbReference>
<dbReference type="Pfam" id="PF00664">
    <property type="entry name" value="ABC_membrane"/>
    <property type="match status" value="1"/>
</dbReference>
<dbReference type="Pfam" id="PF00005">
    <property type="entry name" value="ABC_tran"/>
    <property type="match status" value="2"/>
</dbReference>
<dbReference type="Pfam" id="PF24357">
    <property type="entry name" value="TMD0_ABC"/>
    <property type="match status" value="1"/>
</dbReference>
<dbReference type="SMART" id="SM00382">
    <property type="entry name" value="AAA"/>
    <property type="match status" value="2"/>
</dbReference>
<dbReference type="SUPFAM" id="SSF90123">
    <property type="entry name" value="ABC transporter transmembrane region"/>
    <property type="match status" value="2"/>
</dbReference>
<dbReference type="SUPFAM" id="SSF52540">
    <property type="entry name" value="P-loop containing nucleoside triphosphate hydrolases"/>
    <property type="match status" value="2"/>
</dbReference>
<dbReference type="PROSITE" id="PS50929">
    <property type="entry name" value="ABC_TM1F"/>
    <property type="match status" value="2"/>
</dbReference>
<dbReference type="PROSITE" id="PS00211">
    <property type="entry name" value="ABC_TRANSPORTER_1"/>
    <property type="match status" value="1"/>
</dbReference>
<dbReference type="PROSITE" id="PS50893">
    <property type="entry name" value="ABC_TRANSPORTER_2"/>
    <property type="match status" value="2"/>
</dbReference>
<organism>
    <name type="scientific">Dothideomycetidae sp. (strain 11243)</name>
    <name type="common">Fungal sp. (strain No.11243)</name>
    <dbReference type="NCBI Taxonomy" id="1603295"/>
    <lineage>
        <taxon>Eukaryota</taxon>
        <taxon>Fungi</taxon>
        <taxon>Dikarya</taxon>
        <taxon>Ascomycota</taxon>
        <taxon>Pezizomycotina</taxon>
        <taxon>Dothideomycetes</taxon>
        <taxon>Dothideomycetidae</taxon>
    </lineage>
</organism>
<feature type="chain" id="PRO_0000454576" description="ABC-type transporter frbG">
    <location>
        <begin position="1"/>
        <end position="1476"/>
    </location>
</feature>
<feature type="transmembrane region" description="Helical" evidence="1">
    <location>
        <begin position="26"/>
        <end position="46"/>
    </location>
</feature>
<feature type="transmembrane region" description="Helical" evidence="1">
    <location>
        <begin position="64"/>
        <end position="84"/>
    </location>
</feature>
<feature type="transmembrane region" description="Helical" evidence="1">
    <location>
        <begin position="97"/>
        <end position="117"/>
    </location>
</feature>
<feature type="transmembrane region" description="Helical" evidence="1">
    <location>
        <begin position="122"/>
        <end position="142"/>
    </location>
</feature>
<feature type="transmembrane region" description="Helical" evidence="1">
    <location>
        <begin position="146"/>
        <end position="166"/>
    </location>
</feature>
<feature type="transmembrane region" description="Helical" evidence="1 3">
    <location>
        <begin position="266"/>
        <end position="286"/>
    </location>
</feature>
<feature type="transmembrane region" description="Helical" evidence="1 3">
    <location>
        <begin position="302"/>
        <end position="322"/>
    </location>
</feature>
<feature type="transmembrane region" description="Helical" evidence="1 3">
    <location>
        <begin position="380"/>
        <end position="400"/>
    </location>
</feature>
<feature type="transmembrane region" description="Helical" evidence="1 3">
    <location>
        <begin position="409"/>
        <end position="429"/>
    </location>
</feature>
<feature type="transmembrane region" description="Helical" evidence="1 3">
    <location>
        <begin position="487"/>
        <end position="507"/>
    </location>
</feature>
<feature type="transmembrane region" description="Helical" evidence="1 3">
    <location>
        <begin position="533"/>
        <end position="553"/>
    </location>
</feature>
<feature type="transmembrane region" description="Helical" evidence="1 3">
    <location>
        <begin position="898"/>
        <end position="918"/>
    </location>
</feature>
<feature type="transmembrane region" description="Helical" evidence="1 3">
    <location>
        <begin position="936"/>
        <end position="956"/>
    </location>
</feature>
<feature type="transmembrane region" description="Helical" evidence="1 3">
    <location>
        <begin position="1017"/>
        <end position="1037"/>
    </location>
</feature>
<feature type="transmembrane region" description="Helical" evidence="1 3">
    <location>
        <begin position="1121"/>
        <end position="1141"/>
    </location>
</feature>
<feature type="transmembrane region" description="Helical" evidence="1 3">
    <location>
        <begin position="1151"/>
        <end position="1171"/>
    </location>
</feature>
<feature type="domain" description="ABC transmembrane type-1 1" evidence="3">
    <location>
        <begin position="274"/>
        <end position="553"/>
    </location>
</feature>
<feature type="domain" description="ABC transporter 1" evidence="2">
    <location>
        <begin position="619"/>
        <end position="845"/>
    </location>
</feature>
<feature type="domain" description="ABC transmembrane type-1 2" evidence="3">
    <location>
        <begin position="898"/>
        <end position="1179"/>
    </location>
</feature>
<feature type="domain" description="ABC transporter 2" evidence="2">
    <location>
        <begin position="1216"/>
        <end position="1447"/>
    </location>
</feature>
<feature type="binding site" evidence="2">
    <location>
        <begin position="652"/>
        <end position="659"/>
    </location>
    <ligand>
        <name>ATP</name>
        <dbReference type="ChEBI" id="CHEBI:30616"/>
    </ligand>
</feature>
<feature type="binding site" evidence="2">
    <location>
        <begin position="1250"/>
        <end position="1257"/>
    </location>
    <ligand>
        <name>ATP</name>
        <dbReference type="ChEBI" id="CHEBI:30616"/>
    </ligand>
</feature>
<feature type="glycosylation site" description="N-linked (GlcNAc...) asparagine" evidence="4">
    <location>
        <position position="244"/>
    </location>
</feature>
<feature type="glycosylation site" description="N-linked (GlcNAc...) asparagine" evidence="4">
    <location>
        <position position="464"/>
    </location>
</feature>
<feature type="glycosylation site" description="N-linked (GlcNAc...) asparagine" evidence="4">
    <location>
        <position position="694"/>
    </location>
</feature>
<feature type="glycosylation site" description="N-linked (GlcNAc...) asparagine" evidence="4">
    <location>
        <position position="776"/>
    </location>
</feature>
<feature type="glycosylation site" description="N-linked (GlcNAc...) asparagine" evidence="4">
    <location>
        <position position="805"/>
    </location>
</feature>
<feature type="glycosylation site" description="N-linked (GlcNAc...) asparagine" evidence="4">
    <location>
        <position position="842"/>
    </location>
</feature>
<feature type="glycosylation site" description="N-linked (GlcNAc...) asparagine" evidence="4">
    <location>
        <position position="1235"/>
    </location>
</feature>
<accession>A0A0S6XH62</accession>
<proteinExistence type="evidence at protein level"/>
<sequence length="1476" mass="161215">MCSIADLDGIGPFSSNPQCGHLSFTLLFEEAVLAAVPLGLCVVLALLRVRQLRLQSPKARRDRLYYAKLTALFLLASVQLVQLIQWTRPSTPKTRASIAIAAVSFASTIVFIGLCHLEHIRSAKPSDLLTLYFVTCIAFDIIRTRTLWIVSGGTAVASTFTVGLVLRLLFALLESRPKTRALQRQYLRESPEARTSLINRLFFWWVNPLLWTGFKRILDPGHLFNLDRHISSSHLFHVSAQRLNDTDLSKSYAVLLLCLREYKWTFLAGVLPRLALTGFTFAQPFLVTRFLSYESNRDARDAGATGTWLIVAYAGVYIGIAISQAGYIHQTFRFITMVRGSLLTLLYHDTMNKGSSAGIDPTSAELTLVSADIEKIQMGLQTMHQAWASFVDICLATWLLERHLGLATIPSVGFSLLCVVFGGGVAVMAGSRQTLWLEAIQKRLGLTSDVINMFKSVKMTALVNISAARVLELRDKEITVSKKFRRCLVFMVSLTYLSNVFAPIIGFTTYTLAPAIHKNNILDSARAFSSLTIFALLTEGVGSFVHSAVNLMLAVSSFERYRTTLLEKHTWHESKKASRRWTLTAPPLLENTDAEQWALEVLAATADAHTPPDDKQVCIQARDTNIGWSSEKIVVQSLSLVVRKREITLVTGPTNSGKSTLLRAMLGEAWIEGPALHRHFDRAAYCDQIPWLANKTIRQNILGGSPVDEDWYETTLQACQLKPDLGRLAQGDQTVVGNEGSRLSGGQRTRVALARAVYSRLDIMLLDDITSGLDPNTTKSIVEALFGKDGLFRRAGQTVVVASNNASFLSLADQVVDLGSGSPKVTRRNVESSSPVTAHVHNQTSPKGSRIDSARGSLDEISVADFRLEEPKREPRRLDSDTSIYMYYVRTVGVVNTAVFLALCMALVFAMVFPSIWVAWWVEANARGETNQLAKYLLVYFFLGVAALIALIGGGSHLMLRMVPRSARILHRALLDAVVVAPVPFMTRNDAGETLNRFSQDLEIIDTDVPLSGFTTLFAFITCIAQAIVVCVSSPFVTAGMVPTLVLVYFIQKFYLRTSPQLRALDLEAKAPLIGHMQETLRGLATIRAFGWAEDYEERNMRLVDESQKPFYQLTCIQRWLGLVLDLVVAGIAILLAIVIVSDKNGGATSGFLGIALTSLVSFGLNLGGFIGGWTGLETALTAVARVKRFSADTAKEDLPEECQTPPTDWPQRGEIVFDDVTASYGPGTTDVLSNVSFRISPGEKIGIIGRTGSGKSSLVSTLSRTLDLISGSILIDSIPLSSLPRDTVRQALINMPQDAFVLHGSIRTNVDPRSRLTDEAITEVLTELGLWPILAPLGGLDADAVSALPAQGLKQLLCFARVLAQPGRVMVLDEATSRLDPEASAKVKQAIMRRSEGRTLLTVAHKIDELDGYDRIMVVDAGKVVAFDTPGAVQGYLSSSSPTSSPTCSSSAAALSSGAHRVAAVGVLGTEAGRA</sequence>
<evidence type="ECO:0000255" key="1"/>
<evidence type="ECO:0000255" key="2">
    <source>
        <dbReference type="PROSITE-ProRule" id="PRU00434"/>
    </source>
</evidence>
<evidence type="ECO:0000255" key="3">
    <source>
        <dbReference type="PROSITE-ProRule" id="PRU00441"/>
    </source>
</evidence>
<evidence type="ECO:0000255" key="4">
    <source>
        <dbReference type="PROSITE-ProRule" id="PRU00498"/>
    </source>
</evidence>
<evidence type="ECO:0000269" key="5">
    <source>
    </source>
</evidence>
<evidence type="ECO:0000269" key="6">
    <source>
    </source>
</evidence>
<evidence type="ECO:0000269" key="7">
    <source>
    </source>
</evidence>
<evidence type="ECO:0000303" key="8">
    <source>
    </source>
</evidence>
<evidence type="ECO:0000305" key="9"/>
<evidence type="ECO:0000305" key="10">
    <source>
    </source>
</evidence>
<reference key="1">
    <citation type="journal article" date="2015" name="Genome Announc.">
        <title>Genome sequence of fungal species No.11243, which produces the antifungal antibiotic FR901469.</title>
        <authorList>
            <person name="Matsui M."/>
            <person name="Yokoyama T."/>
            <person name="Nemoto K."/>
            <person name="Kumagai T."/>
            <person name="Terai G."/>
            <person name="Arita M."/>
            <person name="Machida M."/>
            <person name="Shibata T."/>
        </authorList>
    </citation>
    <scope>NUCLEOTIDE SEQUENCE [LARGE SCALE GENOMIC DNA]</scope>
</reference>
<reference key="2">
    <citation type="journal article" date="2000" name="J. Antibiot.">
        <title>FR901469, a novel antifungal antibiotic from an unidentified fungus No.11243. I. Taxonomy, fermentation, isolation, physico-chemical properties and biological properties.</title>
        <authorList>
            <person name="Fujie A."/>
            <person name="Iwamoto T."/>
            <person name="Muramatsu H."/>
            <person name="Okudaira T."/>
            <person name="Nitta K."/>
            <person name="Nakanishi T."/>
            <person name="Sakamoto K."/>
            <person name="Hori Y."/>
            <person name="Hino M."/>
            <person name="Hashimoto S."/>
            <person name="Okuhara M."/>
        </authorList>
    </citation>
    <scope>BIOTECHNOLOGY</scope>
</reference>
<reference key="3">
    <citation type="journal article" date="2000" name="J. Antibiot.">
        <title>FR901469, a novel antifungal antibiotic from an unidentified fungus No.11243. II. In vitro and in vivo activities.</title>
        <authorList>
            <person name="Fujie A."/>
            <person name="Iwamoto T."/>
            <person name="Muramatsu H."/>
            <person name="Okudaira T."/>
            <person name="Sato I."/>
            <person name="Furuta T."/>
            <person name="Tsurumi Y."/>
            <person name="Hori Y."/>
            <person name="Hino M."/>
            <person name="Hashimoto S."/>
            <person name="Okuhara M."/>
        </authorList>
    </citation>
    <scope>BIOTECHNOLOGY</scope>
</reference>
<reference key="4">
    <citation type="journal article" date="2017" name="J. Biosci. Bioeng.">
        <title>Identification of a putative FR901469 biosynthesis gene cluster in fungal sp. No. 11243 and enhancement of the productivity by overexpressing the transcription factor gene frbF.</title>
        <authorList>
            <person name="Matsui M."/>
            <person name="Yokoyama T."/>
            <person name="Nemoto K."/>
            <person name="Kumagai T."/>
            <person name="Terai G."/>
            <person name="Tamano K."/>
            <person name="Machida M."/>
            <person name="Shibata T."/>
        </authorList>
    </citation>
    <scope>FUNCTION</scope>
    <scope>INDUCTION</scope>
</reference>